<gene>
    <name evidence="1" type="primary">trpB</name>
    <name type="ordered locus">EcolC_2366</name>
</gene>
<sequence length="397" mass="42983">MTTLLNPYFGEFGGMYVPQILMPALRQLEEAFVSAQKDPEFQAQFNDLLKNYAGRPTALTKCQNITAGTNTTLYLKREDLLHGGAHKTNQVLGQALLAKRMGKTEIIAETGAGQHGVASALASALLGLKCRIYMGAKDVERQSPNVFRMRLMGAEVIPVHSGSATLKDACNEALRDWSGSYETAHYMLGTAAGPHPYPTIVREFQRMIGEETKAQILEREGRLPDAVIACVGGGSNAIGMFADFINETNVGLIGVEPGGHGIETGEHGAPLKHGRVGIYFGMKAPMMQTEDGQIEESYSISAGLDFPSVGPQHAYLNSTGRADYVSITDDEALEAFKTLCLHEGIIPALESSHALAHALKMMRENPDKEQLLVVNLSGRGDKDIFTVHDILKARGEI</sequence>
<accession>B1ITJ4</accession>
<comment type="function">
    <text evidence="1">The beta subunit is responsible for the synthesis of L-tryptophan from indole and L-serine.</text>
</comment>
<comment type="catalytic activity">
    <reaction evidence="1">
        <text>(1S,2R)-1-C-(indol-3-yl)glycerol 3-phosphate + L-serine = D-glyceraldehyde 3-phosphate + L-tryptophan + H2O</text>
        <dbReference type="Rhea" id="RHEA:10532"/>
        <dbReference type="ChEBI" id="CHEBI:15377"/>
        <dbReference type="ChEBI" id="CHEBI:33384"/>
        <dbReference type="ChEBI" id="CHEBI:57912"/>
        <dbReference type="ChEBI" id="CHEBI:58866"/>
        <dbReference type="ChEBI" id="CHEBI:59776"/>
        <dbReference type="EC" id="4.2.1.20"/>
    </reaction>
</comment>
<comment type="cofactor">
    <cofactor evidence="1">
        <name>pyridoxal 5'-phosphate</name>
        <dbReference type="ChEBI" id="CHEBI:597326"/>
    </cofactor>
</comment>
<comment type="pathway">
    <text evidence="1">Amino-acid biosynthesis; L-tryptophan biosynthesis; L-tryptophan from chorismate: step 5/5.</text>
</comment>
<comment type="subunit">
    <text evidence="1">Tetramer of two alpha and two beta chains.</text>
</comment>
<comment type="similarity">
    <text evidence="1">Belongs to the TrpB family.</text>
</comment>
<organism>
    <name type="scientific">Escherichia coli (strain ATCC 8739 / DSM 1576 / NBRC 3972 / NCIMB 8545 / WDCM 00012 / Crooks)</name>
    <dbReference type="NCBI Taxonomy" id="481805"/>
    <lineage>
        <taxon>Bacteria</taxon>
        <taxon>Pseudomonadati</taxon>
        <taxon>Pseudomonadota</taxon>
        <taxon>Gammaproteobacteria</taxon>
        <taxon>Enterobacterales</taxon>
        <taxon>Enterobacteriaceae</taxon>
        <taxon>Escherichia</taxon>
    </lineage>
</organism>
<keyword id="KW-0028">Amino-acid biosynthesis</keyword>
<keyword id="KW-0057">Aromatic amino acid biosynthesis</keyword>
<keyword id="KW-0456">Lyase</keyword>
<keyword id="KW-0663">Pyridoxal phosphate</keyword>
<keyword id="KW-0822">Tryptophan biosynthesis</keyword>
<name>TRPB_ECOLC</name>
<dbReference type="EC" id="4.2.1.20" evidence="1"/>
<dbReference type="EMBL" id="CP000946">
    <property type="protein sequence ID" value="ACA78001.1"/>
    <property type="molecule type" value="Genomic_DNA"/>
</dbReference>
<dbReference type="RefSeq" id="WP_000209520.1">
    <property type="nucleotide sequence ID" value="NZ_MTFT01000016.1"/>
</dbReference>
<dbReference type="SMR" id="B1ITJ4"/>
<dbReference type="GeneID" id="75203373"/>
<dbReference type="KEGG" id="ecl:EcolC_2366"/>
<dbReference type="HOGENOM" id="CLU_016734_3_1_6"/>
<dbReference type="UniPathway" id="UPA00035">
    <property type="reaction ID" value="UER00044"/>
</dbReference>
<dbReference type="GO" id="GO:0005737">
    <property type="term" value="C:cytoplasm"/>
    <property type="evidence" value="ECO:0007669"/>
    <property type="project" value="TreeGrafter"/>
</dbReference>
<dbReference type="GO" id="GO:0004834">
    <property type="term" value="F:tryptophan synthase activity"/>
    <property type="evidence" value="ECO:0007669"/>
    <property type="project" value="UniProtKB-UniRule"/>
</dbReference>
<dbReference type="CDD" id="cd06446">
    <property type="entry name" value="Trp-synth_B"/>
    <property type="match status" value="1"/>
</dbReference>
<dbReference type="FunFam" id="3.40.50.1100:FF:000001">
    <property type="entry name" value="Tryptophan synthase beta chain"/>
    <property type="match status" value="1"/>
</dbReference>
<dbReference type="FunFam" id="3.40.50.1100:FF:000004">
    <property type="entry name" value="Tryptophan synthase beta chain"/>
    <property type="match status" value="1"/>
</dbReference>
<dbReference type="Gene3D" id="3.40.50.1100">
    <property type="match status" value="2"/>
</dbReference>
<dbReference type="HAMAP" id="MF_00133">
    <property type="entry name" value="Trp_synth_beta"/>
    <property type="match status" value="1"/>
</dbReference>
<dbReference type="InterPro" id="IPR006653">
    <property type="entry name" value="Trp_synth_b_CS"/>
</dbReference>
<dbReference type="InterPro" id="IPR006654">
    <property type="entry name" value="Trp_synth_beta"/>
</dbReference>
<dbReference type="InterPro" id="IPR023026">
    <property type="entry name" value="Trp_synth_beta/beta-like"/>
</dbReference>
<dbReference type="InterPro" id="IPR001926">
    <property type="entry name" value="TrpB-like_PALP"/>
</dbReference>
<dbReference type="InterPro" id="IPR036052">
    <property type="entry name" value="TrpB-like_PALP_sf"/>
</dbReference>
<dbReference type="NCBIfam" id="TIGR00263">
    <property type="entry name" value="trpB"/>
    <property type="match status" value="1"/>
</dbReference>
<dbReference type="PANTHER" id="PTHR48077:SF3">
    <property type="entry name" value="TRYPTOPHAN SYNTHASE"/>
    <property type="match status" value="1"/>
</dbReference>
<dbReference type="PANTHER" id="PTHR48077">
    <property type="entry name" value="TRYPTOPHAN SYNTHASE-RELATED"/>
    <property type="match status" value="1"/>
</dbReference>
<dbReference type="Pfam" id="PF00291">
    <property type="entry name" value="PALP"/>
    <property type="match status" value="1"/>
</dbReference>
<dbReference type="PIRSF" id="PIRSF001413">
    <property type="entry name" value="Trp_syn_beta"/>
    <property type="match status" value="1"/>
</dbReference>
<dbReference type="SUPFAM" id="SSF53686">
    <property type="entry name" value="Tryptophan synthase beta subunit-like PLP-dependent enzymes"/>
    <property type="match status" value="1"/>
</dbReference>
<dbReference type="PROSITE" id="PS00168">
    <property type="entry name" value="TRP_SYNTHASE_BETA"/>
    <property type="match status" value="1"/>
</dbReference>
<proteinExistence type="inferred from homology"/>
<protein>
    <recommendedName>
        <fullName evidence="1">Tryptophan synthase beta chain</fullName>
        <ecNumber evidence="1">4.2.1.20</ecNumber>
    </recommendedName>
</protein>
<feature type="chain" id="PRO_1000076386" description="Tryptophan synthase beta chain">
    <location>
        <begin position="1"/>
        <end position="397"/>
    </location>
</feature>
<feature type="modified residue" description="N6-(pyridoxal phosphate)lysine" evidence="1">
    <location>
        <position position="87"/>
    </location>
</feature>
<reference key="1">
    <citation type="submission" date="2008-02" db="EMBL/GenBank/DDBJ databases">
        <title>Complete sequence of Escherichia coli C str. ATCC 8739.</title>
        <authorList>
            <person name="Copeland A."/>
            <person name="Lucas S."/>
            <person name="Lapidus A."/>
            <person name="Glavina del Rio T."/>
            <person name="Dalin E."/>
            <person name="Tice H."/>
            <person name="Bruce D."/>
            <person name="Goodwin L."/>
            <person name="Pitluck S."/>
            <person name="Kiss H."/>
            <person name="Brettin T."/>
            <person name="Detter J.C."/>
            <person name="Han C."/>
            <person name="Kuske C.R."/>
            <person name="Schmutz J."/>
            <person name="Larimer F."/>
            <person name="Land M."/>
            <person name="Hauser L."/>
            <person name="Kyrpides N."/>
            <person name="Mikhailova N."/>
            <person name="Ingram L."/>
            <person name="Richardson P."/>
        </authorList>
    </citation>
    <scope>NUCLEOTIDE SEQUENCE [LARGE SCALE GENOMIC DNA]</scope>
    <source>
        <strain>ATCC 8739 / DSM 1576 / NBRC 3972 / NCIMB 8545 / WDCM 00012 / Crooks</strain>
    </source>
</reference>
<evidence type="ECO:0000255" key="1">
    <source>
        <dbReference type="HAMAP-Rule" id="MF_00133"/>
    </source>
</evidence>